<dbReference type="EMBL" id="CP000395">
    <property type="protein sequence ID" value="ABH01749.1"/>
    <property type="molecule type" value="Genomic_DNA"/>
</dbReference>
<dbReference type="EMBL" id="CP002933">
    <property type="protein sequence ID" value="AEL69703.1"/>
    <property type="molecule type" value="Genomic_DNA"/>
</dbReference>
<dbReference type="RefSeq" id="WP_011601050.1">
    <property type="nucleotide sequence ID" value="NC_008277.1"/>
</dbReference>
<dbReference type="SMR" id="Q0SN29"/>
<dbReference type="STRING" id="29518.BLA32_01870"/>
<dbReference type="KEGG" id="baf:BAPKO_0506"/>
<dbReference type="KEGG" id="bafz:BafPKo_0495"/>
<dbReference type="PATRIC" id="fig|390236.22.peg.475"/>
<dbReference type="eggNOG" id="COG0087">
    <property type="taxonomic scope" value="Bacteria"/>
</dbReference>
<dbReference type="HOGENOM" id="CLU_044142_4_1_12"/>
<dbReference type="OrthoDB" id="9806135at2"/>
<dbReference type="Proteomes" id="UP000005216">
    <property type="component" value="Chromosome"/>
</dbReference>
<dbReference type="GO" id="GO:0022625">
    <property type="term" value="C:cytosolic large ribosomal subunit"/>
    <property type="evidence" value="ECO:0007669"/>
    <property type="project" value="TreeGrafter"/>
</dbReference>
<dbReference type="GO" id="GO:0019843">
    <property type="term" value="F:rRNA binding"/>
    <property type="evidence" value="ECO:0007669"/>
    <property type="project" value="UniProtKB-UniRule"/>
</dbReference>
<dbReference type="GO" id="GO:0003735">
    <property type="term" value="F:structural constituent of ribosome"/>
    <property type="evidence" value="ECO:0007669"/>
    <property type="project" value="InterPro"/>
</dbReference>
<dbReference type="GO" id="GO:0006412">
    <property type="term" value="P:translation"/>
    <property type="evidence" value="ECO:0007669"/>
    <property type="project" value="UniProtKB-UniRule"/>
</dbReference>
<dbReference type="FunFam" id="2.40.30.10:FF:000004">
    <property type="entry name" value="50S ribosomal protein L3"/>
    <property type="match status" value="1"/>
</dbReference>
<dbReference type="Gene3D" id="2.40.30.10">
    <property type="entry name" value="Translation factors"/>
    <property type="match status" value="2"/>
</dbReference>
<dbReference type="HAMAP" id="MF_01325_B">
    <property type="entry name" value="Ribosomal_uL3_B"/>
    <property type="match status" value="1"/>
</dbReference>
<dbReference type="InterPro" id="IPR000597">
    <property type="entry name" value="Ribosomal_uL3"/>
</dbReference>
<dbReference type="InterPro" id="IPR019927">
    <property type="entry name" value="Ribosomal_uL3_bac/org-type"/>
</dbReference>
<dbReference type="InterPro" id="IPR019926">
    <property type="entry name" value="Ribosomal_uL3_CS"/>
</dbReference>
<dbReference type="InterPro" id="IPR009000">
    <property type="entry name" value="Transl_B-barrel_sf"/>
</dbReference>
<dbReference type="NCBIfam" id="TIGR03625">
    <property type="entry name" value="L3_bact"/>
    <property type="match status" value="1"/>
</dbReference>
<dbReference type="PANTHER" id="PTHR11229">
    <property type="entry name" value="50S RIBOSOMAL PROTEIN L3"/>
    <property type="match status" value="1"/>
</dbReference>
<dbReference type="PANTHER" id="PTHR11229:SF16">
    <property type="entry name" value="LARGE RIBOSOMAL SUBUNIT PROTEIN UL3C"/>
    <property type="match status" value="1"/>
</dbReference>
<dbReference type="Pfam" id="PF00297">
    <property type="entry name" value="Ribosomal_L3"/>
    <property type="match status" value="1"/>
</dbReference>
<dbReference type="SUPFAM" id="SSF50447">
    <property type="entry name" value="Translation proteins"/>
    <property type="match status" value="1"/>
</dbReference>
<dbReference type="PROSITE" id="PS00474">
    <property type="entry name" value="RIBOSOMAL_L3"/>
    <property type="match status" value="1"/>
</dbReference>
<organism>
    <name type="scientific">Borreliella afzelii (strain PKo)</name>
    <name type="common">Borrelia afzelii</name>
    <dbReference type="NCBI Taxonomy" id="390236"/>
    <lineage>
        <taxon>Bacteria</taxon>
        <taxon>Pseudomonadati</taxon>
        <taxon>Spirochaetota</taxon>
        <taxon>Spirochaetia</taxon>
        <taxon>Spirochaetales</taxon>
        <taxon>Borreliaceae</taxon>
        <taxon>Borreliella</taxon>
    </lineage>
</organism>
<sequence>MLGLIGKKVGMTQIFQKNGIVVPVTVIEFQPNYIIGKKTVDRDGYSALIAGSVDLKGSKVSKPIKGQYKSLKDIEPKKYVIELKGLDGYDAGDEIKVDVFKSVKYVDVTGTTKGKGFQGAMKRHNFSGGPSSHGSKFHRHLGGTGQATTPARTFKGTKMAGRMGGNQQTIQNLEVVLINEEKRAILVKGAVPGAKGSFVVVKKSKK</sequence>
<reference key="1">
    <citation type="journal article" date="2006" name="BMC Genomics">
        <title>Comparative genome analysis: selection pressure on the Borrelia vls cassettes is essential for infectivity.</title>
        <authorList>
            <person name="Gloeckner G."/>
            <person name="Schulte-Spechtel U."/>
            <person name="Schilhabel M."/>
            <person name="Felder M."/>
            <person name="Suehnel J."/>
            <person name="Wilske B."/>
            <person name="Platzer M."/>
        </authorList>
    </citation>
    <scope>NUCLEOTIDE SEQUENCE [LARGE SCALE GENOMIC DNA]</scope>
    <source>
        <strain>PKo</strain>
    </source>
</reference>
<reference key="2">
    <citation type="journal article" date="2011" name="J. Bacteriol.">
        <title>Whole-genome sequences of two Borrelia afzelii and two Borrelia garinii Lyme disease agent isolates.</title>
        <authorList>
            <person name="Casjens S.R."/>
            <person name="Mongodin E.F."/>
            <person name="Qiu W.G."/>
            <person name="Dunn J.J."/>
            <person name="Luft B.J."/>
            <person name="Fraser-Liggett C.M."/>
            <person name="Schutzer S.E."/>
        </authorList>
    </citation>
    <scope>NUCLEOTIDE SEQUENCE [LARGE SCALE GENOMIC DNA]</scope>
    <source>
        <strain>PKo</strain>
    </source>
</reference>
<keyword id="KW-0687">Ribonucleoprotein</keyword>
<keyword id="KW-0689">Ribosomal protein</keyword>
<keyword id="KW-0694">RNA-binding</keyword>
<keyword id="KW-0699">rRNA-binding</keyword>
<comment type="function">
    <text evidence="1">One of the primary rRNA binding proteins, it binds directly near the 3'-end of the 23S rRNA, where it nucleates assembly of the 50S subunit.</text>
</comment>
<comment type="subunit">
    <text evidence="1">Part of the 50S ribosomal subunit. Forms a cluster with proteins L14 and L19.</text>
</comment>
<comment type="similarity">
    <text evidence="1">Belongs to the universal ribosomal protein uL3 family.</text>
</comment>
<feature type="chain" id="PRO_1000052014" description="Large ribosomal subunit protein uL3">
    <location>
        <begin position="1"/>
        <end position="206"/>
    </location>
</feature>
<feature type="region of interest" description="Disordered" evidence="2">
    <location>
        <begin position="127"/>
        <end position="151"/>
    </location>
</feature>
<protein>
    <recommendedName>
        <fullName evidence="1">Large ribosomal subunit protein uL3</fullName>
    </recommendedName>
    <alternativeName>
        <fullName evidence="3">50S ribosomal protein L3</fullName>
    </alternativeName>
</protein>
<name>RL3_BORAP</name>
<gene>
    <name evidence="1" type="primary">rplC</name>
    <name type="ordered locus">BAPKO_0506</name>
    <name type="ordered locus">BafPKo_0495</name>
</gene>
<accession>Q0SN29</accession>
<accession>G0ISC2</accession>
<evidence type="ECO:0000255" key="1">
    <source>
        <dbReference type="HAMAP-Rule" id="MF_01325"/>
    </source>
</evidence>
<evidence type="ECO:0000256" key="2">
    <source>
        <dbReference type="SAM" id="MobiDB-lite"/>
    </source>
</evidence>
<evidence type="ECO:0000305" key="3"/>
<proteinExistence type="inferred from homology"/>